<accession>B1HUT5</accession>
<dbReference type="EMBL" id="CP000817">
    <property type="protein sequence ID" value="ACA37965.1"/>
    <property type="molecule type" value="Genomic_DNA"/>
</dbReference>
<dbReference type="RefSeq" id="WP_008173457.1">
    <property type="nucleotide sequence ID" value="NC_010382.1"/>
</dbReference>
<dbReference type="SMR" id="B1HUT5"/>
<dbReference type="EnsemblBacteria" id="ACA37965">
    <property type="protein sequence ID" value="ACA37965"/>
    <property type="gene ID" value="Bsph_0336"/>
</dbReference>
<dbReference type="KEGG" id="lsp:Bsph_0336"/>
<dbReference type="HOGENOM" id="CLU_143991_0_0_9"/>
<dbReference type="Proteomes" id="UP000002164">
    <property type="component" value="Chromosome"/>
</dbReference>
<dbReference type="GO" id="GO:0005886">
    <property type="term" value="C:plasma membrane"/>
    <property type="evidence" value="ECO:0007669"/>
    <property type="project" value="UniProtKB-SubCell"/>
</dbReference>
<dbReference type="HAMAP" id="MF_01502">
    <property type="entry name" value="UPF0295"/>
    <property type="match status" value="1"/>
</dbReference>
<dbReference type="InterPro" id="IPR020912">
    <property type="entry name" value="UPF0295"/>
</dbReference>
<dbReference type="NCBIfam" id="NF002796">
    <property type="entry name" value="PRK02935.1"/>
    <property type="match status" value="1"/>
</dbReference>
<dbReference type="Pfam" id="PF11023">
    <property type="entry name" value="DUF2614"/>
    <property type="match status" value="1"/>
</dbReference>
<protein>
    <recommendedName>
        <fullName evidence="1">UPF0295 protein Bsph_0336</fullName>
    </recommendedName>
</protein>
<proteinExistence type="inferred from homology"/>
<feature type="chain" id="PRO_0000346313" description="UPF0295 protein Bsph_0336">
    <location>
        <begin position="1"/>
        <end position="117"/>
    </location>
</feature>
<feature type="transmembrane region" description="Helical" evidence="1">
    <location>
        <begin position="13"/>
        <end position="33"/>
    </location>
</feature>
<feature type="transmembrane region" description="Helical" evidence="1">
    <location>
        <begin position="37"/>
        <end position="57"/>
    </location>
</feature>
<sequence>MKPYKSKINKIRSFALALIFIGFIVMYGGIFFKNSPILVLIFMTLGVLCIIGSTVVYAWIGLLSTRAIQVECPNCHKHTKVLGRVDMCMYCNEPLTLDPTLEGKEFDQSYNHKTKKS</sequence>
<keyword id="KW-1003">Cell membrane</keyword>
<keyword id="KW-0472">Membrane</keyword>
<keyword id="KW-0812">Transmembrane</keyword>
<keyword id="KW-1133">Transmembrane helix</keyword>
<evidence type="ECO:0000255" key="1">
    <source>
        <dbReference type="HAMAP-Rule" id="MF_01502"/>
    </source>
</evidence>
<name>Y336_LYSSC</name>
<gene>
    <name type="ordered locus">Bsph_0336</name>
</gene>
<reference key="1">
    <citation type="journal article" date="2008" name="J. Bacteriol.">
        <title>Complete genome sequence of the mosquitocidal bacterium Bacillus sphaericus C3-41 and comparison with those of closely related Bacillus species.</title>
        <authorList>
            <person name="Hu X."/>
            <person name="Fan W."/>
            <person name="Han B."/>
            <person name="Liu H."/>
            <person name="Zheng D."/>
            <person name="Li Q."/>
            <person name="Dong W."/>
            <person name="Yan J."/>
            <person name="Gao M."/>
            <person name="Berry C."/>
            <person name="Yuan Z."/>
        </authorList>
    </citation>
    <scope>NUCLEOTIDE SEQUENCE [LARGE SCALE GENOMIC DNA]</scope>
    <source>
        <strain>C3-41</strain>
    </source>
</reference>
<organism>
    <name type="scientific">Lysinibacillus sphaericus (strain C3-41)</name>
    <dbReference type="NCBI Taxonomy" id="444177"/>
    <lineage>
        <taxon>Bacteria</taxon>
        <taxon>Bacillati</taxon>
        <taxon>Bacillota</taxon>
        <taxon>Bacilli</taxon>
        <taxon>Bacillales</taxon>
        <taxon>Bacillaceae</taxon>
        <taxon>Lysinibacillus</taxon>
    </lineage>
</organism>
<comment type="subcellular location">
    <subcellularLocation>
        <location evidence="1">Cell membrane</location>
        <topology evidence="1">Multi-pass membrane protein</topology>
    </subcellularLocation>
</comment>
<comment type="similarity">
    <text evidence="1">Belongs to the UPF0295 family.</text>
</comment>